<name>PHAF1_MOUSE</name>
<dbReference type="EMBL" id="AK156120">
    <property type="protein sequence ID" value="BAE33592.1"/>
    <property type="molecule type" value="mRNA"/>
</dbReference>
<dbReference type="EMBL" id="CH466525">
    <property type="protein sequence ID" value="EDL11253.1"/>
    <property type="molecule type" value="Genomic_DNA"/>
</dbReference>
<dbReference type="EMBL" id="BC006874">
    <property type="protein sequence ID" value="AAH06874.1"/>
    <property type="molecule type" value="mRNA"/>
</dbReference>
<dbReference type="EMBL" id="BC057919">
    <property type="protein sequence ID" value="AAH57919.1"/>
    <property type="molecule type" value="mRNA"/>
</dbReference>
<dbReference type="CCDS" id="CCDS22593.1"/>
<dbReference type="RefSeq" id="NP_663579.2">
    <property type="nucleotide sequence ID" value="NM_145604.3"/>
</dbReference>
<dbReference type="FunCoup" id="Q922R1">
    <property type="interactions" value="1287"/>
</dbReference>
<dbReference type="STRING" id="10090.ENSMUSP00000034361"/>
<dbReference type="iPTMnet" id="Q922R1"/>
<dbReference type="PhosphoSitePlus" id="Q922R1"/>
<dbReference type="jPOST" id="Q922R1"/>
<dbReference type="PaxDb" id="10090-ENSMUSP00000034361"/>
<dbReference type="PeptideAtlas" id="Q922R1"/>
<dbReference type="Pumba" id="Q922R1"/>
<dbReference type="Antibodypedia" id="29405">
    <property type="antibodies" value="46 antibodies from 18 providers"/>
</dbReference>
<dbReference type="DNASU" id="234678"/>
<dbReference type="Ensembl" id="ENSMUST00000034361.10">
    <property type="protein sequence ID" value="ENSMUSP00000034361.4"/>
    <property type="gene ID" value="ENSMUSG00000031889.10"/>
</dbReference>
<dbReference type="GeneID" id="234678"/>
<dbReference type="KEGG" id="mmu:234678"/>
<dbReference type="UCSC" id="uc009nbt.2">
    <property type="organism name" value="mouse"/>
</dbReference>
<dbReference type="AGR" id="MGI:2443049"/>
<dbReference type="CTD" id="80262"/>
<dbReference type="MGI" id="MGI:2443049">
    <property type="gene designation" value="Phaf1"/>
</dbReference>
<dbReference type="VEuPathDB" id="HostDB:ENSMUSG00000031889"/>
<dbReference type="eggNOG" id="KOG2819">
    <property type="taxonomic scope" value="Eukaryota"/>
</dbReference>
<dbReference type="GeneTree" id="ENSGT00940000153528"/>
<dbReference type="HOGENOM" id="CLU_032056_0_1_1"/>
<dbReference type="InParanoid" id="Q922R1"/>
<dbReference type="OMA" id="YRKNDQK"/>
<dbReference type="OrthoDB" id="411211at2759"/>
<dbReference type="PhylomeDB" id="Q922R1"/>
<dbReference type="TreeFam" id="TF313669"/>
<dbReference type="BioGRID-ORCS" id="234678">
    <property type="hits" value="4 hits in 76 CRISPR screens"/>
</dbReference>
<dbReference type="PRO" id="PR:Q922R1"/>
<dbReference type="Proteomes" id="UP000000589">
    <property type="component" value="Chromosome 8"/>
</dbReference>
<dbReference type="RNAct" id="Q922R1">
    <property type="molecule type" value="protein"/>
</dbReference>
<dbReference type="Bgee" id="ENSMUSG00000031889">
    <property type="expression patterns" value="Expressed in cleaving embryo and 253 other cell types or tissues"/>
</dbReference>
<dbReference type="ExpressionAtlas" id="Q922R1">
    <property type="expression patterns" value="baseline and differential"/>
</dbReference>
<dbReference type="GO" id="GO:0000407">
    <property type="term" value="C:phagophore assembly site"/>
    <property type="evidence" value="ECO:0000250"/>
    <property type="project" value="UniProtKB"/>
</dbReference>
<dbReference type="InterPro" id="IPR005373">
    <property type="entry name" value="PHAF1"/>
</dbReference>
<dbReference type="InterPro" id="IPR039156">
    <property type="entry name" value="PHAF1/BROMI"/>
</dbReference>
<dbReference type="PANTHER" id="PTHR13465:SF2">
    <property type="entry name" value="PHAGOSOME ASSEMBLY FACTOR 1"/>
    <property type="match status" value="1"/>
</dbReference>
<dbReference type="PANTHER" id="PTHR13465">
    <property type="entry name" value="UPF0183 PROTEIN"/>
    <property type="match status" value="1"/>
</dbReference>
<dbReference type="Pfam" id="PF03676">
    <property type="entry name" value="PHAF1"/>
    <property type="match status" value="1"/>
</dbReference>
<gene>
    <name evidence="3" type="primary">Phaf1</name>
</gene>
<reference key="1">
    <citation type="journal article" date="2005" name="Science">
        <title>The transcriptional landscape of the mammalian genome.</title>
        <authorList>
            <person name="Carninci P."/>
            <person name="Kasukawa T."/>
            <person name="Katayama S."/>
            <person name="Gough J."/>
            <person name="Frith M.C."/>
            <person name="Maeda N."/>
            <person name="Oyama R."/>
            <person name="Ravasi T."/>
            <person name="Lenhard B."/>
            <person name="Wells C."/>
            <person name="Kodzius R."/>
            <person name="Shimokawa K."/>
            <person name="Bajic V.B."/>
            <person name="Brenner S.E."/>
            <person name="Batalov S."/>
            <person name="Forrest A.R."/>
            <person name="Zavolan M."/>
            <person name="Davis M.J."/>
            <person name="Wilming L.G."/>
            <person name="Aidinis V."/>
            <person name="Allen J.E."/>
            <person name="Ambesi-Impiombato A."/>
            <person name="Apweiler R."/>
            <person name="Aturaliya R.N."/>
            <person name="Bailey T.L."/>
            <person name="Bansal M."/>
            <person name="Baxter L."/>
            <person name="Beisel K.W."/>
            <person name="Bersano T."/>
            <person name="Bono H."/>
            <person name="Chalk A.M."/>
            <person name="Chiu K.P."/>
            <person name="Choudhary V."/>
            <person name="Christoffels A."/>
            <person name="Clutterbuck D.R."/>
            <person name="Crowe M.L."/>
            <person name="Dalla E."/>
            <person name="Dalrymple B.P."/>
            <person name="de Bono B."/>
            <person name="Della Gatta G."/>
            <person name="di Bernardo D."/>
            <person name="Down T."/>
            <person name="Engstrom P."/>
            <person name="Fagiolini M."/>
            <person name="Faulkner G."/>
            <person name="Fletcher C.F."/>
            <person name="Fukushima T."/>
            <person name="Furuno M."/>
            <person name="Futaki S."/>
            <person name="Gariboldi M."/>
            <person name="Georgii-Hemming P."/>
            <person name="Gingeras T.R."/>
            <person name="Gojobori T."/>
            <person name="Green R.E."/>
            <person name="Gustincich S."/>
            <person name="Harbers M."/>
            <person name="Hayashi Y."/>
            <person name="Hensch T.K."/>
            <person name="Hirokawa N."/>
            <person name="Hill D."/>
            <person name="Huminiecki L."/>
            <person name="Iacono M."/>
            <person name="Ikeo K."/>
            <person name="Iwama A."/>
            <person name="Ishikawa T."/>
            <person name="Jakt M."/>
            <person name="Kanapin A."/>
            <person name="Katoh M."/>
            <person name="Kawasawa Y."/>
            <person name="Kelso J."/>
            <person name="Kitamura H."/>
            <person name="Kitano H."/>
            <person name="Kollias G."/>
            <person name="Krishnan S.P."/>
            <person name="Kruger A."/>
            <person name="Kummerfeld S.K."/>
            <person name="Kurochkin I.V."/>
            <person name="Lareau L.F."/>
            <person name="Lazarevic D."/>
            <person name="Lipovich L."/>
            <person name="Liu J."/>
            <person name="Liuni S."/>
            <person name="McWilliam S."/>
            <person name="Madan Babu M."/>
            <person name="Madera M."/>
            <person name="Marchionni L."/>
            <person name="Matsuda H."/>
            <person name="Matsuzawa S."/>
            <person name="Miki H."/>
            <person name="Mignone F."/>
            <person name="Miyake S."/>
            <person name="Morris K."/>
            <person name="Mottagui-Tabar S."/>
            <person name="Mulder N."/>
            <person name="Nakano N."/>
            <person name="Nakauchi H."/>
            <person name="Ng P."/>
            <person name="Nilsson R."/>
            <person name="Nishiguchi S."/>
            <person name="Nishikawa S."/>
            <person name="Nori F."/>
            <person name="Ohara O."/>
            <person name="Okazaki Y."/>
            <person name="Orlando V."/>
            <person name="Pang K.C."/>
            <person name="Pavan W.J."/>
            <person name="Pavesi G."/>
            <person name="Pesole G."/>
            <person name="Petrovsky N."/>
            <person name="Piazza S."/>
            <person name="Reed J."/>
            <person name="Reid J.F."/>
            <person name="Ring B.Z."/>
            <person name="Ringwald M."/>
            <person name="Rost B."/>
            <person name="Ruan Y."/>
            <person name="Salzberg S.L."/>
            <person name="Sandelin A."/>
            <person name="Schneider C."/>
            <person name="Schoenbach C."/>
            <person name="Sekiguchi K."/>
            <person name="Semple C.A."/>
            <person name="Seno S."/>
            <person name="Sessa L."/>
            <person name="Sheng Y."/>
            <person name="Shibata Y."/>
            <person name="Shimada H."/>
            <person name="Shimada K."/>
            <person name="Silva D."/>
            <person name="Sinclair B."/>
            <person name="Sperling S."/>
            <person name="Stupka E."/>
            <person name="Sugiura K."/>
            <person name="Sultana R."/>
            <person name="Takenaka Y."/>
            <person name="Taki K."/>
            <person name="Tammoja K."/>
            <person name="Tan S.L."/>
            <person name="Tang S."/>
            <person name="Taylor M.S."/>
            <person name="Tegner J."/>
            <person name="Teichmann S.A."/>
            <person name="Ueda H.R."/>
            <person name="van Nimwegen E."/>
            <person name="Verardo R."/>
            <person name="Wei C.L."/>
            <person name="Yagi K."/>
            <person name="Yamanishi H."/>
            <person name="Zabarovsky E."/>
            <person name="Zhu S."/>
            <person name="Zimmer A."/>
            <person name="Hide W."/>
            <person name="Bult C."/>
            <person name="Grimmond S.M."/>
            <person name="Teasdale R.D."/>
            <person name="Liu E.T."/>
            <person name="Brusic V."/>
            <person name="Quackenbush J."/>
            <person name="Wahlestedt C."/>
            <person name="Mattick J.S."/>
            <person name="Hume D.A."/>
            <person name="Kai C."/>
            <person name="Sasaki D."/>
            <person name="Tomaru Y."/>
            <person name="Fukuda S."/>
            <person name="Kanamori-Katayama M."/>
            <person name="Suzuki M."/>
            <person name="Aoki J."/>
            <person name="Arakawa T."/>
            <person name="Iida J."/>
            <person name="Imamura K."/>
            <person name="Itoh M."/>
            <person name="Kato T."/>
            <person name="Kawaji H."/>
            <person name="Kawagashira N."/>
            <person name="Kawashima T."/>
            <person name="Kojima M."/>
            <person name="Kondo S."/>
            <person name="Konno H."/>
            <person name="Nakano K."/>
            <person name="Ninomiya N."/>
            <person name="Nishio T."/>
            <person name="Okada M."/>
            <person name="Plessy C."/>
            <person name="Shibata K."/>
            <person name="Shiraki T."/>
            <person name="Suzuki S."/>
            <person name="Tagami M."/>
            <person name="Waki K."/>
            <person name="Watahiki A."/>
            <person name="Okamura-Oho Y."/>
            <person name="Suzuki H."/>
            <person name="Kawai J."/>
            <person name="Hayashizaki Y."/>
        </authorList>
    </citation>
    <scope>NUCLEOTIDE SEQUENCE [LARGE SCALE MRNA]</scope>
    <source>
        <strain>NOD</strain>
        <tissue>Spleen</tissue>
    </source>
</reference>
<reference key="2">
    <citation type="submission" date="2005-07" db="EMBL/GenBank/DDBJ databases">
        <authorList>
            <person name="Mural R.J."/>
            <person name="Adams M.D."/>
            <person name="Myers E.W."/>
            <person name="Smith H.O."/>
            <person name="Venter J.C."/>
        </authorList>
    </citation>
    <scope>NUCLEOTIDE SEQUENCE [LARGE SCALE GENOMIC DNA]</scope>
</reference>
<reference key="3">
    <citation type="journal article" date="2004" name="Genome Res.">
        <title>The status, quality, and expansion of the NIH full-length cDNA project: the Mammalian Gene Collection (MGC).</title>
        <authorList>
            <consortium name="The MGC Project Team"/>
        </authorList>
    </citation>
    <scope>NUCLEOTIDE SEQUENCE [LARGE SCALE MRNA]</scope>
    <source>
        <strain>FVB/N</strain>
        <tissue>Liver</tissue>
    </source>
</reference>
<reference key="4">
    <citation type="journal article" date="2010" name="Cell">
        <title>A tissue-specific atlas of mouse protein phosphorylation and expression.</title>
        <authorList>
            <person name="Huttlin E.L."/>
            <person name="Jedrychowski M.P."/>
            <person name="Elias J.E."/>
            <person name="Goswami T."/>
            <person name="Rad R."/>
            <person name="Beausoleil S.A."/>
            <person name="Villen J."/>
            <person name="Haas W."/>
            <person name="Sowa M.E."/>
            <person name="Gygi S.P."/>
        </authorList>
    </citation>
    <scope>IDENTIFICATION BY MASS SPECTROMETRY [LARGE SCALE ANALYSIS]</scope>
    <source>
        <tissue>Brain</tissue>
        <tissue>Spleen</tissue>
    </source>
</reference>
<accession>Q922R1</accession>
<accession>Q6PER2</accession>
<protein>
    <recommendedName>
        <fullName evidence="3">Phagosome assembly factor 1</fullName>
    </recommendedName>
</protein>
<comment type="function">
    <text evidence="1">Plays a regulatory role in autophagic activity. In complex with BCAS3, associates with the autophagosome formation site during both non-selective and selective autophagy.</text>
</comment>
<comment type="subunit">
    <text evidence="1">Interacts with BCAS3; the interaction is requrired for the association with the phagophore.</text>
</comment>
<comment type="subcellular location">
    <subcellularLocation>
        <location evidence="1">Cytoplasm</location>
    </subcellularLocation>
    <subcellularLocation>
        <location evidence="1">Preautophagosomal structure</location>
    </subcellularLocation>
    <text evidence="1">The BCAS3:PHAF1 complex is recruited to the preautophagosomal structures adjacent to the damaged mitochondria upon mitophagy in a PRKN-PINK1 dependent manner.</text>
</comment>
<comment type="similarity">
    <text evidence="2">Belongs to the PHAF1 family.</text>
</comment>
<proteinExistence type="evidence at protein level"/>
<organism>
    <name type="scientific">Mus musculus</name>
    <name type="common">Mouse</name>
    <dbReference type="NCBI Taxonomy" id="10090"/>
    <lineage>
        <taxon>Eukaryota</taxon>
        <taxon>Metazoa</taxon>
        <taxon>Chordata</taxon>
        <taxon>Craniata</taxon>
        <taxon>Vertebrata</taxon>
        <taxon>Euteleostomi</taxon>
        <taxon>Mammalia</taxon>
        <taxon>Eutheria</taxon>
        <taxon>Euarchontoglires</taxon>
        <taxon>Glires</taxon>
        <taxon>Rodentia</taxon>
        <taxon>Myomorpha</taxon>
        <taxon>Muroidea</taxon>
        <taxon>Muridae</taxon>
        <taxon>Murinae</taxon>
        <taxon>Mus</taxon>
        <taxon>Mus</taxon>
    </lineage>
</organism>
<evidence type="ECO:0000250" key="1">
    <source>
        <dbReference type="UniProtKB" id="Q9BSU1"/>
    </source>
</evidence>
<evidence type="ECO:0000305" key="2"/>
<evidence type="ECO:0000312" key="3">
    <source>
        <dbReference type="MGI" id="MGI:2443049"/>
    </source>
</evidence>
<feature type="chain" id="PRO_0000221084" description="Phagosome assembly factor 1">
    <location>
        <begin position="1"/>
        <end position="422"/>
    </location>
</feature>
<feature type="sequence conflict" description="In Ref. 3; AAH06874." evidence="2" ref="3">
    <original>E</original>
    <variation>D</variation>
    <location>
        <position position="356"/>
    </location>
</feature>
<sequence>MLDLEVVPERSLGNEQWEFTLGMPLAQAVAILQKHCRIIRNVQVLYSEQSPLSHDLILNLTQDGITLLFDAFNQRLKVIEVCELTKVKLKYCGVHFNSQAIAPTIEQIDQSFGATHPGVYNSTEQLFHLNFRGLSFSFQLDSWTEAPKYEPNFAHGLASLQIPHGATVKRMYIYSGNSLQDTKAPVMPLSCFLGNVYAESVDVLRDGTGPSGLRLRLLAAGCGPGVLADAKMRVFERAVYFGDSCQDVLSMLGSPHKVFYKSEDKMKIHSPSPHKQVPSKCNDYFFNYFTLGVDILFDANTHKVKKFVLHTNYPGHYNFNIYHRCEFKIPLAIKKENAGGQTEICTTYSKWDSIQELLGHPVEKPVVLHRSSSPNNTNPFGSTFCFGLQRMIFEVMQNNHIASVTLYGPPRPGAHLRTAELP</sequence>
<keyword id="KW-0963">Cytoplasm</keyword>
<keyword id="KW-1185">Reference proteome</keyword>